<gene>
    <name type="primary">AMELY</name>
    <name type="synonym">AMGL</name>
    <name type="synonym">AMGY</name>
</gene>
<proteinExistence type="evidence at protein level"/>
<name>AMELY_HUMAN</name>
<feature type="signal peptide" evidence="1">
    <location>
        <begin position="1"/>
        <end position="16"/>
    </location>
</feature>
<feature type="chain" id="PRO_0000001200" description="Amelogenin, Y isoform">
    <location>
        <begin position="17"/>
        <end position="206"/>
    </location>
</feature>
<feature type="region of interest" description="Disordered" evidence="2">
    <location>
        <begin position="118"/>
        <end position="180"/>
    </location>
</feature>
<feature type="compositionally biased region" description="Low complexity" evidence="2">
    <location>
        <begin position="128"/>
        <end position="142"/>
    </location>
</feature>
<feature type="compositionally biased region" description="Pro residues" evidence="2">
    <location>
        <begin position="143"/>
        <end position="180"/>
    </location>
</feature>
<feature type="splice variant" id="VSP_017077" description="In isoform 1." evidence="3 4">
    <location>
        <begin position="35"/>
        <end position="48"/>
    </location>
</feature>
<feature type="sequence conflict" description="In Ref. 2; AAR39431." evidence="5" ref="2">
    <original>F</original>
    <variation>L</variation>
    <location>
        <position position="31"/>
    </location>
</feature>
<feature type="sequence conflict" description="In Ref. 4; AAA62827/CAA32612." evidence="5" ref="4">
    <original>D</original>
    <variation>VSTP</variation>
    <location>
        <position position="206"/>
    </location>
</feature>
<dbReference type="EMBL" id="M86933">
    <property type="protein sequence ID" value="AAA51718.1"/>
    <property type="molecule type" value="mRNA"/>
</dbReference>
<dbReference type="EMBL" id="AY487421">
    <property type="protein sequence ID" value="AAR39431.1"/>
    <property type="molecule type" value="mRNA"/>
</dbReference>
<dbReference type="EMBL" id="BC069138">
    <property type="protein sequence ID" value="AAH69138.1"/>
    <property type="molecule type" value="mRNA"/>
</dbReference>
<dbReference type="EMBL" id="BC074976">
    <property type="protein sequence ID" value="AAH74976.1"/>
    <property type="molecule type" value="mRNA"/>
</dbReference>
<dbReference type="EMBL" id="BC074977">
    <property type="protein sequence ID" value="AAH74977.1"/>
    <property type="molecule type" value="mRNA"/>
</dbReference>
<dbReference type="EMBL" id="M55419">
    <property type="protein sequence ID" value="AAA62827.1"/>
    <property type="molecule type" value="Genomic_DNA"/>
</dbReference>
<dbReference type="EMBL" id="X14439">
    <property type="protein sequence ID" value="CAA32612.1"/>
    <property type="molecule type" value="Genomic_DNA"/>
</dbReference>
<dbReference type="CCDS" id="CCDS14778.1">
    <molecule id="Q99218-1"/>
</dbReference>
<dbReference type="CCDS" id="CCDS94708.1">
    <molecule id="Q99218-2"/>
</dbReference>
<dbReference type="PIR" id="F41816">
    <property type="entry name" value="F41816"/>
</dbReference>
<dbReference type="RefSeq" id="NP_001134.1">
    <molecule id="Q99218-1"/>
    <property type="nucleotide sequence ID" value="NM_001143.2"/>
</dbReference>
<dbReference type="RefSeq" id="NP_001351743.1">
    <molecule id="Q99218-2"/>
    <property type="nucleotide sequence ID" value="NM_001364814.1"/>
</dbReference>
<dbReference type="RefSeq" id="XP_016885531.1">
    <property type="nucleotide sequence ID" value="XM_017030042.1"/>
</dbReference>
<dbReference type="BioGRID" id="106763">
    <property type="interactions" value="1"/>
</dbReference>
<dbReference type="FunCoup" id="Q99218">
    <property type="interactions" value="3"/>
</dbReference>
<dbReference type="IntAct" id="Q99218">
    <property type="interactions" value="1"/>
</dbReference>
<dbReference type="STRING" id="9606.ENSP00000372505"/>
<dbReference type="BioMuta" id="AMELY"/>
<dbReference type="DMDM" id="85681286"/>
<dbReference type="Antibodypedia" id="5353">
    <property type="antibodies" value="25 antibodies from 13 providers"/>
</dbReference>
<dbReference type="DNASU" id="266"/>
<dbReference type="Ensembl" id="ENST00000383036.1">
    <molecule id="Q99218-2"/>
    <property type="protein sequence ID" value="ENSP00000372505.1"/>
    <property type="gene ID" value="ENSG00000099721.16"/>
</dbReference>
<dbReference type="Ensembl" id="ENST00000651267.2">
    <molecule id="Q99218-1"/>
    <property type="protein sequence ID" value="ENSP00000498344.1"/>
    <property type="gene ID" value="ENSG00000099721.16"/>
</dbReference>
<dbReference type="GeneID" id="266"/>
<dbReference type="KEGG" id="hsa:266"/>
<dbReference type="MANE-Select" id="ENST00000651267.2">
    <molecule id="Q99218-1"/>
    <property type="protein sequence ID" value="ENSP00000498344.1"/>
    <property type="RefSeq nucleotide sequence ID" value="NM_001143.2"/>
    <property type="RefSeq protein sequence ID" value="NP_001134.1"/>
</dbReference>
<dbReference type="UCSC" id="uc004fqz.3">
    <molecule id="Q99218-2"/>
    <property type="organism name" value="human"/>
</dbReference>
<dbReference type="AGR" id="HGNC:462"/>
<dbReference type="CTD" id="266"/>
<dbReference type="DisGeNET" id="266"/>
<dbReference type="GeneCards" id="AMELY"/>
<dbReference type="HGNC" id="HGNC:462">
    <property type="gene designation" value="AMELY"/>
</dbReference>
<dbReference type="HPA" id="ENSG00000099721">
    <property type="expression patterns" value="Not detected"/>
</dbReference>
<dbReference type="MalaCards" id="AMELY"/>
<dbReference type="MIM" id="410000">
    <property type="type" value="gene"/>
</dbReference>
<dbReference type="neXtProt" id="NX_Q99218"/>
<dbReference type="OpenTargets" id="ENSG00000099721"/>
<dbReference type="PharmGKB" id="PA24767"/>
<dbReference type="VEuPathDB" id="HostDB:ENSG00000099721"/>
<dbReference type="GeneTree" id="ENSGT01040000241139"/>
<dbReference type="HOGENOM" id="CLU_120753_0_0_1"/>
<dbReference type="InParanoid" id="Q99218"/>
<dbReference type="OMA" id="NMLRYPY"/>
<dbReference type="PAN-GO" id="Q99218">
    <property type="GO annotations" value="3 GO annotations based on evolutionary models"/>
</dbReference>
<dbReference type="PhylomeDB" id="Q99218"/>
<dbReference type="TreeFam" id="TF337092"/>
<dbReference type="PathwayCommons" id="Q99218"/>
<dbReference type="SignaLink" id="Q99218"/>
<dbReference type="BioGRID-ORCS" id="266">
    <property type="hits" value="6 hits in 715 CRISPR screens"/>
</dbReference>
<dbReference type="GeneWiki" id="AMELY"/>
<dbReference type="GenomeRNAi" id="266"/>
<dbReference type="Pharos" id="Q99218">
    <property type="development level" value="Tbio"/>
</dbReference>
<dbReference type="PRO" id="PR:Q99218"/>
<dbReference type="Proteomes" id="UP000005640">
    <property type="component" value="Chromosome Y"/>
</dbReference>
<dbReference type="RNAct" id="Q99218">
    <property type="molecule type" value="protein"/>
</dbReference>
<dbReference type="Bgee" id="ENSG00000099721">
    <property type="expression patterns" value="Expressed in male germ line stem cell (sensu Vertebrata) in testis and 19 other cell types or tissues"/>
</dbReference>
<dbReference type="GO" id="GO:0062023">
    <property type="term" value="C:collagen-containing extracellular matrix"/>
    <property type="evidence" value="ECO:0000318"/>
    <property type="project" value="GO_Central"/>
</dbReference>
<dbReference type="GO" id="GO:0005576">
    <property type="term" value="C:extracellular region"/>
    <property type="evidence" value="ECO:0007669"/>
    <property type="project" value="UniProtKB-KW"/>
</dbReference>
<dbReference type="GO" id="GO:0030345">
    <property type="term" value="F:structural constituent of tooth enamel"/>
    <property type="evidence" value="ECO:0000314"/>
    <property type="project" value="BHF-UCL"/>
</dbReference>
<dbReference type="GO" id="GO:0070166">
    <property type="term" value="P:enamel mineralization"/>
    <property type="evidence" value="ECO:0000318"/>
    <property type="project" value="GO_Central"/>
</dbReference>
<dbReference type="InterPro" id="IPR004116">
    <property type="entry name" value="Amelogenin"/>
</dbReference>
<dbReference type="PANTHER" id="PTHR46794">
    <property type="entry name" value="AMELOGENIN, Y ISOFORM"/>
    <property type="match status" value="1"/>
</dbReference>
<dbReference type="PANTHER" id="PTHR46794:SF6">
    <property type="entry name" value="AMELOGENIN, Y ISOFORM"/>
    <property type="match status" value="1"/>
</dbReference>
<dbReference type="Pfam" id="PF02948">
    <property type="entry name" value="Amelogenin"/>
    <property type="match status" value="1"/>
</dbReference>
<dbReference type="PRINTS" id="PR01757">
    <property type="entry name" value="AMELOGENIN"/>
</dbReference>
<dbReference type="SMART" id="SM00818">
    <property type="entry name" value="Amelogenin"/>
    <property type="match status" value="1"/>
</dbReference>
<sequence>MGTWILFACLVGAAFAMPLPPHPGHPGYINFSYENSHSQAINVDRIALVLTPLKWYQSMIRPPYSSYGYEPMGGWLHHQIIPVVSQQHPLTHTLQSHHHIPVVPAQQPRVRQQALMPVPGQQSMTPTQHHQPNLPLPAQQPFQPQPVQPQPHQPMQPQPPVQPMQPLLPQPPLPPMFPLRPLPPILPDLHLEAWPATDKTKQEEVD</sequence>
<protein>
    <recommendedName>
        <fullName>Amelogenin, Y isoform</fullName>
    </recommendedName>
</protein>
<evidence type="ECO:0000250" key="1"/>
<evidence type="ECO:0000256" key="2">
    <source>
        <dbReference type="SAM" id="MobiDB-lite"/>
    </source>
</evidence>
<evidence type="ECO:0000303" key="3">
    <source>
    </source>
</evidence>
<evidence type="ECO:0000303" key="4">
    <source>
    </source>
</evidence>
<evidence type="ECO:0000305" key="5"/>
<reference key="1">
    <citation type="journal article" date="1992" name="Am. J. Hum. Genet.">
        <title>The human enamel protein gene amelogenin is expressed from both the X and the Y chromosomes.</title>
        <authorList>
            <person name="Salido E.C."/>
            <person name="Yen P.H."/>
            <person name="Koprivnikar K."/>
            <person name="Yu L.-C."/>
            <person name="Shapiro L.J."/>
        </authorList>
    </citation>
    <scope>NUCLEOTIDE SEQUENCE [MRNA] (ISOFORM 1)</scope>
    <source>
        <tissue>Tooth bud</tissue>
    </source>
</reference>
<reference key="2">
    <citation type="submission" date="2003-11" db="EMBL/GenBank/DDBJ databases">
        <authorList>
            <person name="Lin L."/>
            <person name="Zhong G."/>
            <person name="Li H."/>
            <person name="Ke R."/>
            <person name="Shen C."/>
            <person name="Zhou G."/>
            <person name="Yang S."/>
        </authorList>
    </citation>
    <scope>NUCLEOTIDE SEQUENCE [MRNA] (ISOFORM 2)</scope>
</reference>
<reference key="3">
    <citation type="journal article" date="2004" name="Genome Res.">
        <title>The status, quality, and expansion of the NIH full-length cDNA project: the Mammalian Gene Collection (MGC).</title>
        <authorList>
            <consortium name="The MGC Project Team"/>
        </authorList>
    </citation>
    <scope>NUCLEOTIDE SEQUENCE [LARGE SCALE MRNA] (ISOFORM 1)</scope>
</reference>
<reference key="4">
    <citation type="journal article" date="1991" name="Genomics">
        <title>A human X-Y homologous region encodes 'amelogenin'.</title>
        <authorList>
            <person name="Nakahori Y."/>
            <person name="Takenaka O."/>
            <person name="Nakagome Y."/>
        </authorList>
    </citation>
    <scope>NUCLEOTIDE SEQUENCE [GENOMIC DNA] OF 19-206 (ISOFORM 2)</scope>
</reference>
<organism>
    <name type="scientific">Homo sapiens</name>
    <name type="common">Human</name>
    <dbReference type="NCBI Taxonomy" id="9606"/>
    <lineage>
        <taxon>Eukaryota</taxon>
        <taxon>Metazoa</taxon>
        <taxon>Chordata</taxon>
        <taxon>Craniata</taxon>
        <taxon>Vertebrata</taxon>
        <taxon>Euteleostomi</taxon>
        <taxon>Mammalia</taxon>
        <taxon>Eutheria</taxon>
        <taxon>Euarchontoglires</taxon>
        <taxon>Primates</taxon>
        <taxon>Haplorrhini</taxon>
        <taxon>Catarrhini</taxon>
        <taxon>Hominidae</taxon>
        <taxon>Homo</taxon>
    </lineage>
</organism>
<keyword id="KW-0025">Alternative splicing</keyword>
<keyword id="KW-0091">Biomineralization</keyword>
<keyword id="KW-0272">Extracellular matrix</keyword>
<keyword id="KW-1185">Reference proteome</keyword>
<keyword id="KW-0677">Repeat</keyword>
<keyword id="KW-0964">Secreted</keyword>
<keyword id="KW-0732">Signal</keyword>
<comment type="function">
    <text>Plays a role in biomineralization. Seems to regulate the formation of crystallites during the secretory stage of tooth enamel development. Thought to play a major role in the structural organization and mineralization of developing enamel.</text>
</comment>
<comment type="interaction">
    <interactant intactId="EBI-17435683">
        <id>Q99218-1</id>
    </interactant>
    <interactant intactId="EBI-11427100">
        <id>P31937</id>
        <label>HIBADH</label>
    </interactant>
    <organismsDiffer>false</organismsDiffer>
    <experiments>3</experiments>
</comment>
<comment type="subcellular location">
    <subcellularLocation>
        <location>Secreted</location>
        <location>Extracellular space</location>
        <location>Extracellular matrix</location>
    </subcellularLocation>
</comment>
<comment type="alternative products">
    <event type="alternative splicing"/>
    <isoform>
        <id>Q99218-2</id>
        <name>2</name>
        <sequence type="displayed"/>
    </isoform>
    <isoform>
        <id>Q99218-1</id>
        <name>1</name>
        <sequence type="described" ref="VSP_017077"/>
    </isoform>
</comment>
<comment type="developmental stage">
    <text>Transiently but abundantly expressed by ameloblasts during tooth development. Amelogenin is the predominant protein in developing dental enamel.</text>
</comment>
<comment type="similarity">
    <text evidence="5">Belongs to the amelogenin family.</text>
</comment>
<accession>Q99218</accession>
<accession>Q6RWT1</accession>